<feature type="chain" id="PRO_0000339330" description="Conserved oligomeric Golgi complex subunit 6">
    <location>
        <begin position="1"/>
        <end position="675"/>
    </location>
</feature>
<organism>
    <name type="scientific">Schizosaccharomyces pombe (strain 972 / ATCC 24843)</name>
    <name type="common">Fission yeast</name>
    <dbReference type="NCBI Taxonomy" id="284812"/>
    <lineage>
        <taxon>Eukaryota</taxon>
        <taxon>Fungi</taxon>
        <taxon>Dikarya</taxon>
        <taxon>Ascomycota</taxon>
        <taxon>Taphrinomycotina</taxon>
        <taxon>Schizosaccharomycetes</taxon>
        <taxon>Schizosaccharomycetales</taxon>
        <taxon>Schizosaccharomycetaceae</taxon>
        <taxon>Schizosaccharomyces</taxon>
    </lineage>
</organism>
<keyword id="KW-0963">Cytoplasm</keyword>
<keyword id="KW-0333">Golgi apparatus</keyword>
<keyword id="KW-0472">Membrane</keyword>
<keyword id="KW-0539">Nucleus</keyword>
<keyword id="KW-0653">Protein transport</keyword>
<keyword id="KW-1185">Reference proteome</keyword>
<keyword id="KW-0813">Transport</keyword>
<sequence length="675" mass="77327">MDVKSKHGHIKSNPEESLLFRNSVSKNIAQLSSINYADRNVQAALEQLSERKFKNEREARKQLPFEVFSDLIWTNGSIIKELSELSSQTLSVQSQLLKVKNSIDSYKNEWSKKTNDAQILLNSYETFCEEEALIEEKLKNIEIFEKNFVIMDDDLIHLTSSTDVDDRFYLILDKAQEIHDSSDSLFASLSGFVEYSSFEEIVKKMSRYIEAAFEKLFRCVQTELSDPQTAQTLEANSHLKKAFTKLFSEPTMVNKSINLIVQARQQILSTAYLTALTRGDFLSSSRPIELSAPDTVRFIGDLLAWIHQTIVNEKELVEALFAARKRQIQLNPFPPWDVPNVLEDQMNSLLDGSLYGICRPLSSRAQTSVLDLSDIVRLYNVIEILGFYREAFSKIVHDECIILRIIKTLEDFTYQRMKTVLDDELYTISNTNLSITDDLLPPDFVTTFLRNANSIFKIRGASLSVQGVDELPFKMLFMQLFDRILEICAAMTEDVRPPYKGIILMLNVLDSCTNYVGRYTFLNELFEYLQEKTTYYKNNLTTLLNNDYIAQAGLSDLLQKIADTTDDKQALKNYLHSWKWDQQIDKFSTFIRKTLSETIDNLQLLTSPIVTNQVLKETAISFVGAIETVDKALELSNLERRWPLSTEELLIAMNVDSMDTLSDIGQSDIDNLSVN</sequence>
<gene>
    <name type="primary">cog6</name>
    <name type="ORF">SPBC776.10c</name>
</gene>
<reference key="1">
    <citation type="journal article" date="2002" name="Nature">
        <title>The genome sequence of Schizosaccharomyces pombe.</title>
        <authorList>
            <person name="Wood V."/>
            <person name="Gwilliam R."/>
            <person name="Rajandream M.A."/>
            <person name="Lyne M.H."/>
            <person name="Lyne R."/>
            <person name="Stewart A."/>
            <person name="Sgouros J.G."/>
            <person name="Peat N."/>
            <person name="Hayles J."/>
            <person name="Baker S.G."/>
            <person name="Basham D."/>
            <person name="Bowman S."/>
            <person name="Brooks K."/>
            <person name="Brown D."/>
            <person name="Brown S."/>
            <person name="Chillingworth T."/>
            <person name="Churcher C.M."/>
            <person name="Collins M."/>
            <person name="Connor R."/>
            <person name="Cronin A."/>
            <person name="Davis P."/>
            <person name="Feltwell T."/>
            <person name="Fraser A."/>
            <person name="Gentles S."/>
            <person name="Goble A."/>
            <person name="Hamlin N."/>
            <person name="Harris D.E."/>
            <person name="Hidalgo J."/>
            <person name="Hodgson G."/>
            <person name="Holroyd S."/>
            <person name="Hornsby T."/>
            <person name="Howarth S."/>
            <person name="Huckle E.J."/>
            <person name="Hunt S."/>
            <person name="Jagels K."/>
            <person name="James K.D."/>
            <person name="Jones L."/>
            <person name="Jones M."/>
            <person name="Leather S."/>
            <person name="McDonald S."/>
            <person name="McLean J."/>
            <person name="Mooney P."/>
            <person name="Moule S."/>
            <person name="Mungall K.L."/>
            <person name="Murphy L.D."/>
            <person name="Niblett D."/>
            <person name="Odell C."/>
            <person name="Oliver K."/>
            <person name="O'Neil S."/>
            <person name="Pearson D."/>
            <person name="Quail M.A."/>
            <person name="Rabbinowitsch E."/>
            <person name="Rutherford K.M."/>
            <person name="Rutter S."/>
            <person name="Saunders D."/>
            <person name="Seeger K."/>
            <person name="Sharp S."/>
            <person name="Skelton J."/>
            <person name="Simmonds M.N."/>
            <person name="Squares R."/>
            <person name="Squares S."/>
            <person name="Stevens K."/>
            <person name="Taylor K."/>
            <person name="Taylor R.G."/>
            <person name="Tivey A."/>
            <person name="Walsh S.V."/>
            <person name="Warren T."/>
            <person name="Whitehead S."/>
            <person name="Woodward J.R."/>
            <person name="Volckaert G."/>
            <person name="Aert R."/>
            <person name="Robben J."/>
            <person name="Grymonprez B."/>
            <person name="Weltjens I."/>
            <person name="Vanstreels E."/>
            <person name="Rieger M."/>
            <person name="Schaefer M."/>
            <person name="Mueller-Auer S."/>
            <person name="Gabel C."/>
            <person name="Fuchs M."/>
            <person name="Duesterhoeft A."/>
            <person name="Fritzc C."/>
            <person name="Holzer E."/>
            <person name="Moestl D."/>
            <person name="Hilbert H."/>
            <person name="Borzym K."/>
            <person name="Langer I."/>
            <person name="Beck A."/>
            <person name="Lehrach H."/>
            <person name="Reinhardt R."/>
            <person name="Pohl T.M."/>
            <person name="Eger P."/>
            <person name="Zimmermann W."/>
            <person name="Wedler H."/>
            <person name="Wambutt R."/>
            <person name="Purnelle B."/>
            <person name="Goffeau A."/>
            <person name="Cadieu E."/>
            <person name="Dreano S."/>
            <person name="Gloux S."/>
            <person name="Lelaure V."/>
            <person name="Mottier S."/>
            <person name="Galibert F."/>
            <person name="Aves S.J."/>
            <person name="Xiang Z."/>
            <person name="Hunt C."/>
            <person name="Moore K."/>
            <person name="Hurst S.M."/>
            <person name="Lucas M."/>
            <person name="Rochet M."/>
            <person name="Gaillardin C."/>
            <person name="Tallada V.A."/>
            <person name="Garzon A."/>
            <person name="Thode G."/>
            <person name="Daga R.R."/>
            <person name="Cruzado L."/>
            <person name="Jimenez J."/>
            <person name="Sanchez M."/>
            <person name="del Rey F."/>
            <person name="Benito J."/>
            <person name="Dominguez A."/>
            <person name="Revuelta J.L."/>
            <person name="Moreno S."/>
            <person name="Armstrong J."/>
            <person name="Forsburg S.L."/>
            <person name="Cerutti L."/>
            <person name="Lowe T."/>
            <person name="McCombie W.R."/>
            <person name="Paulsen I."/>
            <person name="Potashkin J."/>
            <person name="Shpakovski G.V."/>
            <person name="Ussery D."/>
            <person name="Barrell B.G."/>
            <person name="Nurse P."/>
        </authorList>
    </citation>
    <scope>NUCLEOTIDE SEQUENCE [LARGE SCALE GENOMIC DNA]</scope>
    <source>
        <strain>972 / ATCC 24843</strain>
    </source>
</reference>
<reference key="2">
    <citation type="journal article" date="2006" name="Nat. Biotechnol.">
        <title>ORFeome cloning and global analysis of protein localization in the fission yeast Schizosaccharomyces pombe.</title>
        <authorList>
            <person name="Matsuyama A."/>
            <person name="Arai R."/>
            <person name="Yashiroda Y."/>
            <person name="Shirai A."/>
            <person name="Kamata A."/>
            <person name="Sekido S."/>
            <person name="Kobayashi Y."/>
            <person name="Hashimoto A."/>
            <person name="Hamamoto M."/>
            <person name="Hiraoka Y."/>
            <person name="Horinouchi S."/>
            <person name="Yoshida M."/>
        </authorList>
    </citation>
    <scope>SUBCELLULAR LOCATION [LARGE SCALE ANALYSIS]</scope>
</reference>
<comment type="function">
    <text evidence="1">Acts as a component of the peripheral membrane COG complex that is involved in intra-Golgi protein trafficking. COG is located at the cis-Golgi, and regulates tethering of retrograde intra-Golgi vesicles and possibly a number of other membrane trafficking events (By similarity).</text>
</comment>
<comment type="subcellular location">
    <subcellularLocation>
        <location evidence="2">Cytoplasm</location>
    </subcellularLocation>
    <subcellularLocation>
        <location evidence="2">Nucleus</location>
    </subcellularLocation>
    <subcellularLocation>
        <location evidence="1">Golgi apparatus membrane</location>
        <topology evidence="1">Peripheral membrane protein</topology>
    </subcellularLocation>
    <text>Localizes at the barrier septum.</text>
</comment>
<comment type="similarity">
    <text evidence="3">Belongs to the COG6 family.</text>
</comment>
<accession>O94677</accession>
<proteinExistence type="inferred from homology"/>
<protein>
    <recommendedName>
        <fullName>Conserved oligomeric Golgi complex subunit 6</fullName>
        <shortName>COG complex subunit 6</shortName>
    </recommendedName>
    <alternativeName>
        <fullName>Component of oligomeric Golgi complex 6</fullName>
    </alternativeName>
</protein>
<name>COG6_SCHPO</name>
<dbReference type="EMBL" id="CU329671">
    <property type="protein sequence ID" value="CAA22883.1"/>
    <property type="molecule type" value="Genomic_DNA"/>
</dbReference>
<dbReference type="PIR" id="T40680">
    <property type="entry name" value="T40680"/>
</dbReference>
<dbReference type="RefSeq" id="NP_596325.1">
    <property type="nucleotide sequence ID" value="NM_001022247.2"/>
</dbReference>
<dbReference type="BioGRID" id="277721">
    <property type="interactions" value="3"/>
</dbReference>
<dbReference type="FunCoup" id="O94677">
    <property type="interactions" value="303"/>
</dbReference>
<dbReference type="STRING" id="284812.O94677"/>
<dbReference type="PaxDb" id="4896-SPBC776.10c.1"/>
<dbReference type="EnsemblFungi" id="SPBC776.10c.1">
    <property type="protein sequence ID" value="SPBC776.10c.1:pep"/>
    <property type="gene ID" value="SPBC776.10c"/>
</dbReference>
<dbReference type="GeneID" id="2541207"/>
<dbReference type="KEGG" id="spo:2541207"/>
<dbReference type="PomBase" id="SPBC776.10c">
    <property type="gene designation" value="cog6"/>
</dbReference>
<dbReference type="VEuPathDB" id="FungiDB:SPBC776.10c"/>
<dbReference type="eggNOG" id="KOG3758">
    <property type="taxonomic scope" value="Eukaryota"/>
</dbReference>
<dbReference type="HOGENOM" id="CLU_011361_1_0_1"/>
<dbReference type="InParanoid" id="O94677"/>
<dbReference type="OMA" id="HSCLDFF"/>
<dbReference type="PhylomeDB" id="O94677"/>
<dbReference type="PRO" id="PR:O94677"/>
<dbReference type="Proteomes" id="UP000002485">
    <property type="component" value="Chromosome II"/>
</dbReference>
<dbReference type="GO" id="GO:0032153">
    <property type="term" value="C:cell division site"/>
    <property type="evidence" value="ECO:0007005"/>
    <property type="project" value="PomBase"/>
</dbReference>
<dbReference type="GO" id="GO:0005829">
    <property type="term" value="C:cytosol"/>
    <property type="evidence" value="ECO:0007005"/>
    <property type="project" value="PomBase"/>
</dbReference>
<dbReference type="GO" id="GO:0000139">
    <property type="term" value="C:Golgi membrane"/>
    <property type="evidence" value="ECO:0007669"/>
    <property type="project" value="UniProtKB-SubCell"/>
</dbReference>
<dbReference type="GO" id="GO:0017119">
    <property type="term" value="C:Golgi transport complex"/>
    <property type="evidence" value="ECO:0000318"/>
    <property type="project" value="GO_Central"/>
</dbReference>
<dbReference type="GO" id="GO:0005634">
    <property type="term" value="C:nucleus"/>
    <property type="evidence" value="ECO:0007005"/>
    <property type="project" value="PomBase"/>
</dbReference>
<dbReference type="GO" id="GO:0006891">
    <property type="term" value="P:intra-Golgi vesicle-mediated transport"/>
    <property type="evidence" value="ECO:0000318"/>
    <property type="project" value="GO_Central"/>
</dbReference>
<dbReference type="GO" id="GO:0006886">
    <property type="term" value="P:intracellular protein transport"/>
    <property type="evidence" value="ECO:0000305"/>
    <property type="project" value="PomBase"/>
</dbReference>
<dbReference type="InterPro" id="IPR010490">
    <property type="entry name" value="COG6"/>
</dbReference>
<dbReference type="InterPro" id="IPR048369">
    <property type="entry name" value="COG6_C"/>
</dbReference>
<dbReference type="InterPro" id="IPR048368">
    <property type="entry name" value="COG6_N"/>
</dbReference>
<dbReference type="PANTHER" id="PTHR21506">
    <property type="entry name" value="COMPONENT OF OLIGOMERIC GOLGI COMPLEX 6"/>
    <property type="match status" value="1"/>
</dbReference>
<dbReference type="PANTHER" id="PTHR21506:SF0">
    <property type="entry name" value="CONSERVED OLIGOMERIC GOLGI COMPLEX SUBUNIT 6"/>
    <property type="match status" value="1"/>
</dbReference>
<dbReference type="Pfam" id="PF20653">
    <property type="entry name" value="COG6_C"/>
    <property type="match status" value="1"/>
</dbReference>
<dbReference type="Pfam" id="PF06419">
    <property type="entry name" value="COG6_N"/>
    <property type="match status" value="1"/>
</dbReference>
<dbReference type="SMART" id="SM01087">
    <property type="entry name" value="COG6"/>
    <property type="match status" value="1"/>
</dbReference>
<evidence type="ECO:0000250" key="1"/>
<evidence type="ECO:0000269" key="2">
    <source>
    </source>
</evidence>
<evidence type="ECO:0000305" key="3"/>